<sequence length="516" mass="56474">MVIARGLLRSNASSSSSQAINLLKYVTSTGSLQGHTQNLCDASTRHFSSVPSPQYNSTEENGFKGHGMLAPFTAGWQSTDVHPLVIERSEGSYVYDIDGKKYLDSLAGLWCTALGGSEPRLVKAATEQLHKLPFYHSFWNRTTKPSLDLAKELLSMFTAREMGKVFFTNSGSEANDSQVKLVWYYNNALGRPDKKKFIARSKSYHGSTLISASLSGLPALHQKFDLPAPFVLHTDCPHYWRFHLPGETEEEFATRLANNLEELILKEGPETIAAFIAEPVMGAGGVIPPPKTYFEKVQAIVKKYDILFIADEVITAFGRLGTMFGSDMYNIKPDLVSMAKALSSAYVPIGAIMVSPEISDVIHSQSNKLGSFAHGFTYSGHPVACAVAIEALKIYQERNIPDHVKQISPRFQEGVKAFAGSPIVGEIRGVGLILGTEFADNKSPNDPFPAEWGVGAIFGAECQKRGMLVRVAGDNIMMSPPLIMTPDEVEELVSIYGDALKATEERVAELKSKKNN</sequence>
<name>GATP1_ORYSJ</name>
<gene>
    <name type="primary">OSL2</name>
    <name type="ordered locus">Os04g0614600</name>
    <name type="ordered locus">LOC_Os04g52450</name>
    <name type="ORF">OsJ_16145</name>
    <name type="ORF">OSJNBa0008M17.4</name>
</gene>
<keyword id="KW-0032">Aminotransferase</keyword>
<keyword id="KW-0496">Mitochondrion</keyword>
<keyword id="KW-0663">Pyridoxal phosphate</keyword>
<keyword id="KW-1185">Reference proteome</keyword>
<keyword id="KW-0808">Transferase</keyword>
<keyword id="KW-0809">Transit peptide</keyword>
<accession>Q7XN11</accession>
<accession>A0A0P0WER1</accession>
<accession>Q71SH3</accession>
<comment type="function">
    <text evidence="3 4">Transaminase that degrades gamma-amino butyric acid (GABA) and uses pyruvate as amino-group acceptor, but not 2-oxoglutarate. Not involved in the interaction with blast fungus.</text>
</comment>
<comment type="catalytic activity">
    <reaction>
        <text>4-aminobutanoate + pyruvate = succinate semialdehyde + L-alanine</text>
        <dbReference type="Rhea" id="RHEA:32263"/>
        <dbReference type="ChEBI" id="CHEBI:15361"/>
        <dbReference type="ChEBI" id="CHEBI:57706"/>
        <dbReference type="ChEBI" id="CHEBI:57972"/>
        <dbReference type="ChEBI" id="CHEBI:59888"/>
        <dbReference type="EC" id="2.6.1.96"/>
    </reaction>
</comment>
<comment type="catalytic activity">
    <reaction>
        <text>4-aminobutanoate + glyoxylate = succinate semialdehyde + glycine</text>
        <dbReference type="Rhea" id="RHEA:32267"/>
        <dbReference type="ChEBI" id="CHEBI:36655"/>
        <dbReference type="ChEBI" id="CHEBI:57305"/>
        <dbReference type="ChEBI" id="CHEBI:57706"/>
        <dbReference type="ChEBI" id="CHEBI:59888"/>
        <dbReference type="EC" id="2.6.1.96"/>
    </reaction>
</comment>
<comment type="biophysicochemical properties">
    <phDependence>
        <text evidence="4">Optimum pH is 8.0.</text>
    </phDependence>
    <temperatureDependence>
        <text evidence="4">Optimum temperature is 30 degrees Celsius.</text>
    </temperatureDependence>
</comment>
<comment type="subcellular location">
    <subcellularLocation>
        <location evidence="5">Mitochondrion</location>
    </subcellularLocation>
</comment>
<comment type="tissue specificity">
    <text evidence="4">Expressed in roots, stems and panicles.</text>
</comment>
<comment type="developmental stage">
    <text evidence="4">Strongly up-regulated during leaf senescence.</text>
</comment>
<comment type="similarity">
    <text evidence="5">Belongs to the class-III pyridoxal-phosphate-dependent aminotransferase family.</text>
</comment>
<dbReference type="EC" id="2.6.1.96"/>
<dbReference type="EMBL" id="AF297651">
    <property type="protein sequence ID" value="AAQ14479.1"/>
    <property type="molecule type" value="mRNA"/>
</dbReference>
<dbReference type="EMBL" id="AL662950">
    <property type="protein sequence ID" value="CAE04333.2"/>
    <property type="molecule type" value="Genomic_DNA"/>
</dbReference>
<dbReference type="EMBL" id="AP008210">
    <property type="protein sequence ID" value="BAF15777.1"/>
    <property type="molecule type" value="Genomic_DNA"/>
</dbReference>
<dbReference type="EMBL" id="AP014960">
    <property type="protein sequence ID" value="BAS90992.1"/>
    <property type="molecule type" value="Genomic_DNA"/>
</dbReference>
<dbReference type="EMBL" id="CM000141">
    <property type="protein sequence ID" value="EEE61676.1"/>
    <property type="molecule type" value="Genomic_DNA"/>
</dbReference>
<dbReference type="EMBL" id="AK102306">
    <property type="protein sequence ID" value="BAG95492.1"/>
    <property type="molecule type" value="mRNA"/>
</dbReference>
<dbReference type="RefSeq" id="XP_015636709.1">
    <property type="nucleotide sequence ID" value="XM_015781223.1"/>
</dbReference>
<dbReference type="SMR" id="Q7XN11"/>
<dbReference type="FunCoup" id="Q7XN11">
    <property type="interactions" value="932"/>
</dbReference>
<dbReference type="STRING" id="39947.Q7XN11"/>
<dbReference type="PaxDb" id="39947-Q7XN11"/>
<dbReference type="EnsemblPlants" id="Os04t0614600-01">
    <property type="protein sequence ID" value="Os04t0614600-01"/>
    <property type="gene ID" value="Os04g0614600"/>
</dbReference>
<dbReference type="Gramene" id="Os04t0614600-01">
    <property type="protein sequence ID" value="Os04t0614600-01"/>
    <property type="gene ID" value="Os04g0614600"/>
</dbReference>
<dbReference type="KEGG" id="dosa:Os04g0614600"/>
<dbReference type="eggNOG" id="KOG1404">
    <property type="taxonomic scope" value="Eukaryota"/>
</dbReference>
<dbReference type="HOGENOM" id="CLU_016922_4_1_1"/>
<dbReference type="InParanoid" id="Q7XN11"/>
<dbReference type="OMA" id="GQMSCLL"/>
<dbReference type="OrthoDB" id="425114at2759"/>
<dbReference type="BRENDA" id="2.6.1.19">
    <property type="organism ID" value="4460"/>
</dbReference>
<dbReference type="BRENDA" id="2.6.1.96">
    <property type="organism ID" value="4460"/>
</dbReference>
<dbReference type="PlantReactome" id="R-OSA-1119458">
    <property type="pathway name" value="Glutamate degradation"/>
</dbReference>
<dbReference type="Proteomes" id="UP000000763">
    <property type="component" value="Chromosome 4"/>
</dbReference>
<dbReference type="Proteomes" id="UP000007752">
    <property type="component" value="Chromosome 4"/>
</dbReference>
<dbReference type="Proteomes" id="UP000059680">
    <property type="component" value="Chromosome 4"/>
</dbReference>
<dbReference type="ExpressionAtlas" id="Q7XN11">
    <property type="expression patterns" value="baseline and differential"/>
</dbReference>
<dbReference type="GO" id="GO:0005739">
    <property type="term" value="C:mitochondrion"/>
    <property type="evidence" value="ECO:0007669"/>
    <property type="project" value="UniProtKB-SubCell"/>
</dbReference>
<dbReference type="GO" id="GO:0034387">
    <property type="term" value="F:4-aminobutyrate:pyruvate transaminase activity"/>
    <property type="evidence" value="ECO:0007669"/>
    <property type="project" value="UniProtKB-EC"/>
</dbReference>
<dbReference type="GO" id="GO:0004015">
    <property type="term" value="F:adenosylmethionine-8-amino-7-oxononanoate transaminase activity"/>
    <property type="evidence" value="ECO:0000318"/>
    <property type="project" value="GO_Central"/>
</dbReference>
<dbReference type="GO" id="GO:0030170">
    <property type="term" value="F:pyridoxal phosphate binding"/>
    <property type="evidence" value="ECO:0007669"/>
    <property type="project" value="InterPro"/>
</dbReference>
<dbReference type="GO" id="GO:0009102">
    <property type="term" value="P:biotin biosynthetic process"/>
    <property type="evidence" value="ECO:0000318"/>
    <property type="project" value="GO_Central"/>
</dbReference>
<dbReference type="GO" id="GO:0009448">
    <property type="term" value="P:gamma-aminobutyric acid metabolic process"/>
    <property type="evidence" value="ECO:0000318"/>
    <property type="project" value="GO_Central"/>
</dbReference>
<dbReference type="CDD" id="cd00610">
    <property type="entry name" value="OAT_like"/>
    <property type="match status" value="1"/>
</dbReference>
<dbReference type="FunFam" id="3.40.640.10:FF:000014">
    <property type="entry name" value="Adenosylmethionine-8-amino-7-oxononanoate aminotransferase, probable"/>
    <property type="match status" value="1"/>
</dbReference>
<dbReference type="FunFam" id="3.90.1150.10:FF:000280">
    <property type="entry name" value="Class III aminotransferase"/>
    <property type="match status" value="1"/>
</dbReference>
<dbReference type="Gene3D" id="3.90.1150.10">
    <property type="entry name" value="Aspartate Aminotransferase, domain 1"/>
    <property type="match status" value="1"/>
</dbReference>
<dbReference type="Gene3D" id="3.40.640.10">
    <property type="entry name" value="Type I PLP-dependent aspartate aminotransferase-like (Major domain)"/>
    <property type="match status" value="1"/>
</dbReference>
<dbReference type="InterPro" id="IPR005814">
    <property type="entry name" value="Aminotrans_3"/>
</dbReference>
<dbReference type="InterPro" id="IPR049704">
    <property type="entry name" value="Aminotrans_3_PPA_site"/>
</dbReference>
<dbReference type="InterPro" id="IPR015424">
    <property type="entry name" value="PyrdxlP-dep_Trfase"/>
</dbReference>
<dbReference type="InterPro" id="IPR015421">
    <property type="entry name" value="PyrdxlP-dep_Trfase_major"/>
</dbReference>
<dbReference type="InterPro" id="IPR015422">
    <property type="entry name" value="PyrdxlP-dep_Trfase_small"/>
</dbReference>
<dbReference type="NCBIfam" id="NF004767">
    <property type="entry name" value="PRK06105.1"/>
    <property type="match status" value="1"/>
</dbReference>
<dbReference type="PANTHER" id="PTHR42684">
    <property type="entry name" value="ADENOSYLMETHIONINE-8-AMINO-7-OXONONANOATE AMINOTRANSFERASE"/>
    <property type="match status" value="1"/>
</dbReference>
<dbReference type="PANTHER" id="PTHR42684:SF20">
    <property type="entry name" value="GAMMA-AMINOBUTYRATE TRANSAMINASE 1, MITOCHONDRIAL"/>
    <property type="match status" value="1"/>
</dbReference>
<dbReference type="Pfam" id="PF00202">
    <property type="entry name" value="Aminotran_3"/>
    <property type="match status" value="1"/>
</dbReference>
<dbReference type="SUPFAM" id="SSF53383">
    <property type="entry name" value="PLP-dependent transferases"/>
    <property type="match status" value="1"/>
</dbReference>
<dbReference type="PROSITE" id="PS00600">
    <property type="entry name" value="AA_TRANSFER_CLASS_3"/>
    <property type="match status" value="1"/>
</dbReference>
<evidence type="ECO:0000250" key="1"/>
<evidence type="ECO:0000255" key="2"/>
<evidence type="ECO:0000269" key="3">
    <source>
    </source>
</evidence>
<evidence type="ECO:0000269" key="4">
    <source ref="1"/>
</evidence>
<evidence type="ECO:0000305" key="5"/>
<organism>
    <name type="scientific">Oryza sativa subsp. japonica</name>
    <name type="common">Rice</name>
    <dbReference type="NCBI Taxonomy" id="39947"/>
    <lineage>
        <taxon>Eukaryota</taxon>
        <taxon>Viridiplantae</taxon>
        <taxon>Streptophyta</taxon>
        <taxon>Embryophyta</taxon>
        <taxon>Tracheophyta</taxon>
        <taxon>Spermatophyta</taxon>
        <taxon>Magnoliopsida</taxon>
        <taxon>Liliopsida</taxon>
        <taxon>Poales</taxon>
        <taxon>Poaceae</taxon>
        <taxon>BOP clade</taxon>
        <taxon>Oryzoideae</taxon>
        <taxon>Oryzeae</taxon>
        <taxon>Oryzinae</taxon>
        <taxon>Oryza</taxon>
        <taxon>Oryza sativa</taxon>
    </lineage>
</organism>
<reference key="1">
    <citation type="journal article" date="2005" name="Physiol. Plantarum">
        <title>A novel senescence-associated gene encoding -aminobutyric acid (GABA):pyruvate transaminase is upregulated during rice leaf senescence.</title>
        <authorList>
            <person name="Ansari M.I."/>
            <person name="Lee R.H."/>
            <person name="Chen S.C.G."/>
        </authorList>
    </citation>
    <scope>NUCLEOTIDE SEQUENCE [MRNA]</scope>
    <scope>FUNCTION</scope>
    <scope>BIOPHYSICOCHEMICAL PROPERTIES</scope>
    <scope>TISSUE SPECIFICITY</scope>
    <scope>DEVELOPMENTAL STAGE</scope>
    <source>
        <strain>cv. Tainung 57</strain>
        <tissue>Leaf</tissue>
    </source>
</reference>
<reference key="2">
    <citation type="journal article" date="2002" name="Nature">
        <title>Sequence and analysis of rice chromosome 4.</title>
        <authorList>
            <person name="Feng Q."/>
            <person name="Zhang Y."/>
            <person name="Hao P."/>
            <person name="Wang S."/>
            <person name="Fu G."/>
            <person name="Huang Y."/>
            <person name="Li Y."/>
            <person name="Zhu J."/>
            <person name="Liu Y."/>
            <person name="Hu X."/>
            <person name="Jia P."/>
            <person name="Zhang Y."/>
            <person name="Zhao Q."/>
            <person name="Ying K."/>
            <person name="Yu S."/>
            <person name="Tang Y."/>
            <person name="Weng Q."/>
            <person name="Zhang L."/>
            <person name="Lu Y."/>
            <person name="Mu J."/>
            <person name="Lu Y."/>
            <person name="Zhang L.S."/>
            <person name="Yu Z."/>
            <person name="Fan D."/>
            <person name="Liu X."/>
            <person name="Lu T."/>
            <person name="Li C."/>
            <person name="Wu Y."/>
            <person name="Sun T."/>
            <person name="Lei H."/>
            <person name="Li T."/>
            <person name="Hu H."/>
            <person name="Guan J."/>
            <person name="Wu M."/>
            <person name="Zhang R."/>
            <person name="Zhou B."/>
            <person name="Chen Z."/>
            <person name="Chen L."/>
            <person name="Jin Z."/>
            <person name="Wang R."/>
            <person name="Yin H."/>
            <person name="Cai Z."/>
            <person name="Ren S."/>
            <person name="Lv G."/>
            <person name="Gu W."/>
            <person name="Zhu G."/>
            <person name="Tu Y."/>
            <person name="Jia J."/>
            <person name="Zhang Y."/>
            <person name="Chen J."/>
            <person name="Kang H."/>
            <person name="Chen X."/>
            <person name="Shao C."/>
            <person name="Sun Y."/>
            <person name="Hu Q."/>
            <person name="Zhang X."/>
            <person name="Zhang W."/>
            <person name="Wang L."/>
            <person name="Ding C."/>
            <person name="Sheng H."/>
            <person name="Gu J."/>
            <person name="Chen S."/>
            <person name="Ni L."/>
            <person name="Zhu F."/>
            <person name="Chen W."/>
            <person name="Lan L."/>
            <person name="Lai Y."/>
            <person name="Cheng Z."/>
            <person name="Gu M."/>
            <person name="Jiang J."/>
            <person name="Li J."/>
            <person name="Hong G."/>
            <person name="Xue Y."/>
            <person name="Han B."/>
        </authorList>
    </citation>
    <scope>NUCLEOTIDE SEQUENCE [LARGE SCALE GENOMIC DNA]</scope>
    <source>
        <strain>cv. Nipponbare</strain>
    </source>
</reference>
<reference key="3">
    <citation type="journal article" date="2005" name="Nature">
        <title>The map-based sequence of the rice genome.</title>
        <authorList>
            <consortium name="International rice genome sequencing project (IRGSP)"/>
        </authorList>
    </citation>
    <scope>NUCLEOTIDE SEQUENCE [LARGE SCALE GENOMIC DNA]</scope>
    <source>
        <strain>cv. Nipponbare</strain>
    </source>
</reference>
<reference key="4">
    <citation type="journal article" date="2008" name="Nucleic Acids Res.">
        <title>The rice annotation project database (RAP-DB): 2008 update.</title>
        <authorList>
            <consortium name="The rice annotation project (RAP)"/>
        </authorList>
    </citation>
    <scope>GENOME REANNOTATION</scope>
    <source>
        <strain>cv. Nipponbare</strain>
    </source>
</reference>
<reference key="5">
    <citation type="journal article" date="2013" name="Rice">
        <title>Improvement of the Oryza sativa Nipponbare reference genome using next generation sequence and optical map data.</title>
        <authorList>
            <person name="Kawahara Y."/>
            <person name="de la Bastide M."/>
            <person name="Hamilton J.P."/>
            <person name="Kanamori H."/>
            <person name="McCombie W.R."/>
            <person name="Ouyang S."/>
            <person name="Schwartz D.C."/>
            <person name="Tanaka T."/>
            <person name="Wu J."/>
            <person name="Zhou S."/>
            <person name="Childs K.L."/>
            <person name="Davidson R.M."/>
            <person name="Lin H."/>
            <person name="Quesada-Ocampo L."/>
            <person name="Vaillancourt B."/>
            <person name="Sakai H."/>
            <person name="Lee S.S."/>
            <person name="Kim J."/>
            <person name="Numa H."/>
            <person name="Itoh T."/>
            <person name="Buell C.R."/>
            <person name="Matsumoto T."/>
        </authorList>
    </citation>
    <scope>GENOME REANNOTATION</scope>
    <source>
        <strain>cv. Nipponbare</strain>
    </source>
</reference>
<reference key="6">
    <citation type="journal article" date="2005" name="PLoS Biol.">
        <title>The genomes of Oryza sativa: a history of duplications.</title>
        <authorList>
            <person name="Yu J."/>
            <person name="Wang J."/>
            <person name="Lin W."/>
            <person name="Li S."/>
            <person name="Li H."/>
            <person name="Zhou J."/>
            <person name="Ni P."/>
            <person name="Dong W."/>
            <person name="Hu S."/>
            <person name="Zeng C."/>
            <person name="Zhang J."/>
            <person name="Zhang Y."/>
            <person name="Li R."/>
            <person name="Xu Z."/>
            <person name="Li S."/>
            <person name="Li X."/>
            <person name="Zheng H."/>
            <person name="Cong L."/>
            <person name="Lin L."/>
            <person name="Yin J."/>
            <person name="Geng J."/>
            <person name="Li G."/>
            <person name="Shi J."/>
            <person name="Liu J."/>
            <person name="Lv H."/>
            <person name="Li J."/>
            <person name="Wang J."/>
            <person name="Deng Y."/>
            <person name="Ran L."/>
            <person name="Shi X."/>
            <person name="Wang X."/>
            <person name="Wu Q."/>
            <person name="Li C."/>
            <person name="Ren X."/>
            <person name="Wang J."/>
            <person name="Wang X."/>
            <person name="Li D."/>
            <person name="Liu D."/>
            <person name="Zhang X."/>
            <person name="Ji Z."/>
            <person name="Zhao W."/>
            <person name="Sun Y."/>
            <person name="Zhang Z."/>
            <person name="Bao J."/>
            <person name="Han Y."/>
            <person name="Dong L."/>
            <person name="Ji J."/>
            <person name="Chen P."/>
            <person name="Wu S."/>
            <person name="Liu J."/>
            <person name="Xiao Y."/>
            <person name="Bu D."/>
            <person name="Tan J."/>
            <person name="Yang L."/>
            <person name="Ye C."/>
            <person name="Zhang J."/>
            <person name="Xu J."/>
            <person name="Zhou Y."/>
            <person name="Yu Y."/>
            <person name="Zhang B."/>
            <person name="Zhuang S."/>
            <person name="Wei H."/>
            <person name="Liu B."/>
            <person name="Lei M."/>
            <person name="Yu H."/>
            <person name="Li Y."/>
            <person name="Xu H."/>
            <person name="Wei S."/>
            <person name="He X."/>
            <person name="Fang L."/>
            <person name="Zhang Z."/>
            <person name="Zhang Y."/>
            <person name="Huang X."/>
            <person name="Su Z."/>
            <person name="Tong W."/>
            <person name="Li J."/>
            <person name="Tong Z."/>
            <person name="Li S."/>
            <person name="Ye J."/>
            <person name="Wang L."/>
            <person name="Fang L."/>
            <person name="Lei T."/>
            <person name="Chen C.-S."/>
            <person name="Chen H.-C."/>
            <person name="Xu Z."/>
            <person name="Li H."/>
            <person name="Huang H."/>
            <person name="Zhang F."/>
            <person name="Xu H."/>
            <person name="Li N."/>
            <person name="Zhao C."/>
            <person name="Li S."/>
            <person name="Dong L."/>
            <person name="Huang Y."/>
            <person name="Li L."/>
            <person name="Xi Y."/>
            <person name="Qi Q."/>
            <person name="Li W."/>
            <person name="Zhang B."/>
            <person name="Hu W."/>
            <person name="Zhang Y."/>
            <person name="Tian X."/>
            <person name="Jiao Y."/>
            <person name="Liang X."/>
            <person name="Jin J."/>
            <person name="Gao L."/>
            <person name="Zheng W."/>
            <person name="Hao B."/>
            <person name="Liu S.-M."/>
            <person name="Wang W."/>
            <person name="Yuan L."/>
            <person name="Cao M."/>
            <person name="McDermott J."/>
            <person name="Samudrala R."/>
            <person name="Wang J."/>
            <person name="Wong G.K.-S."/>
            <person name="Yang H."/>
        </authorList>
    </citation>
    <scope>NUCLEOTIDE SEQUENCE [LARGE SCALE GENOMIC DNA]</scope>
    <source>
        <strain>cv. Nipponbare</strain>
    </source>
</reference>
<reference key="7">
    <citation type="journal article" date="2003" name="Science">
        <title>Collection, mapping, and annotation of over 28,000 cDNA clones from japonica rice.</title>
        <authorList>
            <consortium name="The rice full-length cDNA consortium"/>
        </authorList>
    </citation>
    <scope>NUCLEOTIDE SEQUENCE [LARGE SCALE MRNA]</scope>
    <source>
        <strain>cv. Nipponbare</strain>
    </source>
</reference>
<reference key="8">
    <citation type="journal article" date="2006" name="J. Plant Res.">
        <title>Molecular cloning and differential expression of an gamma-aminobutyrate transaminase gene, OsGABA-T, in rice (Oryza sativa) leaves infected with blast fungus.</title>
        <authorList>
            <person name="Wu C."/>
            <person name="Zhou S."/>
            <person name="Zhang Q."/>
            <person name="Zhao W."/>
            <person name="Peng Y."/>
        </authorList>
    </citation>
    <scope>FUNCTION</scope>
</reference>
<protein>
    <recommendedName>
        <fullName>Gamma-aminobutyrate transaminase 1, mitochondrial</fullName>
        <ecNumber>2.6.1.96</ecNumber>
    </recommendedName>
</protein>
<feature type="transit peptide" description="Mitochondrion" evidence="2">
    <location>
        <begin position="1"/>
        <end position="47"/>
    </location>
</feature>
<feature type="chain" id="PRO_0000416848" description="Gamma-aminobutyrate transaminase 1, mitochondrial">
    <location>
        <begin position="48"/>
        <end position="516"/>
    </location>
</feature>
<feature type="binding site" evidence="1">
    <location>
        <begin position="171"/>
        <end position="172"/>
    </location>
    <ligand>
        <name>pyridoxal 5'-phosphate</name>
        <dbReference type="ChEBI" id="CHEBI:597326"/>
    </ligand>
</feature>
<feature type="binding site" evidence="1">
    <location>
        <position position="204"/>
    </location>
    <ligand>
        <name>substrate</name>
    </ligand>
</feature>
<feature type="binding site" evidence="1">
    <location>
        <position position="311"/>
    </location>
    <ligand>
        <name>pyridoxal 5'-phosphate</name>
        <dbReference type="ChEBI" id="CHEBI:597326"/>
    </ligand>
</feature>
<feature type="binding site" evidence="1">
    <location>
        <position position="340"/>
    </location>
    <ligand>
        <name>substrate</name>
    </ligand>
</feature>
<feature type="modified residue" description="N6-(pyridoxal phosphate)lysine" evidence="1">
    <location>
        <position position="340"/>
    </location>
</feature>
<proteinExistence type="evidence at protein level"/>